<name>DRD2_HUMAN</name>
<reference key="1">
    <citation type="journal article" date="1989" name="DNA">
        <title>The major dopamine D2 receptor: molecular analysis of the human D2A subtype.</title>
        <authorList>
            <person name="Selbie L.A."/>
            <person name="Hayes G."/>
            <person name="Shine J."/>
        </authorList>
    </citation>
    <scope>NUCLEOTIDE SEQUENCE [MRNA] (ISOFORM 1)</scope>
</reference>
<reference key="2">
    <citation type="journal article" date="1989" name="EMBO J.">
        <title>The dopamine D2 receptor: two molecular forms generated by alternative splicing.</title>
        <authorList>
            <person name="Dal-Toso R."/>
            <person name="Sommer B."/>
            <person name="Ewert M."/>
            <person name="Herb A."/>
            <person name="Pritchett D.B."/>
            <person name="Bach A."/>
            <person name="Shivers B.D."/>
            <person name="Seeburg P.H."/>
        </authorList>
    </citation>
    <scope>NUCLEOTIDE SEQUENCE [GENOMIC DNA / MRNA] (ISOFORMS 1 AND 2)</scope>
    <scope>TISSUE SPECIFICITY</scope>
</reference>
<reference key="3">
    <citation type="journal article" date="1990" name="Nucleic Acids Res.">
        <title>Human retina D2 receptor cDNAs have multiple polyadenylation sites and differ from a pituitary clone at the 5' non-coding region.</title>
        <authorList>
            <person name="Robakis N.K."/>
            <person name="Mohamadi M."/>
            <person name="Fu D.Y."/>
            <person name="Sambamurti K."/>
            <person name="Refolo L.M."/>
        </authorList>
    </citation>
    <scope>NUCLEOTIDE SEQUENCE [MRNA] (ISOFORM 1)</scope>
    <source>
        <tissue>Retina</tissue>
    </source>
</reference>
<reference key="4">
    <citation type="journal article" date="1989" name="Proc. Natl. Acad. Sci. U.S.A.">
        <title>Cloning of the cDNA and gene for a human D2 dopamine receptor.</title>
        <authorList>
            <person name="Grandy D.K."/>
            <person name="Marchionni M.A."/>
            <person name="Makam H."/>
            <person name="Stofko R.E."/>
            <person name="Alfano M."/>
            <person name="Frothingham L."/>
            <person name="Fischer J.B."/>
            <person name="Burke-Howie K.J."/>
            <person name="Bunzow J.R."/>
            <person name="Server A.C."/>
            <person name="Civelli O."/>
        </authorList>
    </citation>
    <scope>NUCLEOTIDE SEQUENCE [MRNA] (ISOFORM 1)</scope>
</reference>
<reference key="5">
    <citation type="journal article" date="1990" name="Mol. Pharmacol.">
        <title>Molecular cloning and expression of a dopamine D2 receptor from human retina.</title>
        <authorList>
            <person name="Stormann T.M."/>
            <person name="Gdula D.C."/>
            <person name="Weiner D.M."/>
            <person name="Brann M.R."/>
        </authorList>
    </citation>
    <scope>NUCLEOTIDE SEQUENCE [MRNA] (ISOFORM 1)</scope>
    <source>
        <tissue>Retina</tissue>
    </source>
</reference>
<reference key="6">
    <citation type="journal article" date="1990" name="Adv. Second Messenger Phosphoprotein Res.">
        <title>DNA homology screening: isolation and characterization of the human D2A dopamine receptor subtype.</title>
        <authorList>
            <person name="Selbie L.A."/>
            <person name="Hayes G."/>
            <person name="Shine J."/>
        </authorList>
    </citation>
    <scope>NUCLEOTIDE SEQUENCE (ISOFORM 1)</scope>
</reference>
<reference key="7">
    <citation type="journal article" date="1992" name="Neurochem. Int.">
        <title>Structure and expression of human and rat D2 dopamine receptor genes.</title>
        <authorList>
            <person name="Araki K."/>
            <person name="Kuwano R."/>
            <person name="Morii K."/>
            <person name="Hayashi S."/>
            <person name="Minoshima S."/>
            <person name="Shimizu N."/>
            <person name="Katagiri T."/>
            <person name="Usui H."/>
            <person name="Kumanishi T."/>
            <person name="Takahashi Y."/>
        </authorList>
    </citation>
    <scope>NUCLEOTIDE SEQUENCE [MRNA] (ISOFORM 1)</scope>
</reference>
<reference key="8">
    <citation type="journal article" date="1991" name="Cell. Mol. Neurobiol.">
        <title>D2 dopamine receptors in the human retina: cloning of cDNA and localization of mRNA.</title>
        <authorList>
            <person name="Dearry A."/>
            <person name="Falardeau P."/>
            <person name="Shores C."/>
            <person name="Caron M.G."/>
        </authorList>
    </citation>
    <scope>NUCLEOTIDE SEQUENCE [MRNA] (ISOFORM 1)</scope>
    <source>
        <tissue>Retina</tissue>
    </source>
</reference>
<reference key="9">
    <citation type="journal article" date="1993" name="Neuropsychopharmacology">
        <title>Schizophrenia: normal sequence in the dopamine D2 receptor region that couples to G-proteins. DNA polymorphisms in D2.</title>
        <authorList>
            <person name="Seeman P."/>
            <person name="Ohara K."/>
            <person name="Ulpian C."/>
            <person name="Seeman M.V."/>
            <person name="Jellinger K."/>
            <person name="Tol H.H."/>
            <person name="Niznik H.B."/>
        </authorList>
    </citation>
    <scope>NUCLEOTIDE SEQUENCE [GENOMIC DNA] (ISOFORM 1)</scope>
    <source>
        <tissue>Brain</tissue>
    </source>
</reference>
<reference key="10">
    <citation type="journal article" date="2000" name="Brain Res. Mol. Brain Res.">
        <title>New dopamine receptor, D2(Longer), with unique TG splice site, in human brain.</title>
        <authorList>
            <person name="Seeman P."/>
            <person name="Nam D."/>
            <person name="Ulpian C."/>
            <person name="Liu I.S.C."/>
            <person name="Tallerico T."/>
        </authorList>
    </citation>
    <scope>NUCLEOTIDE SEQUENCE [MRNA] (ISOFORM 3)</scope>
    <source>
        <tissue>Corpus striatum</tissue>
    </source>
</reference>
<reference key="11">
    <citation type="submission" date="2001-07" db="EMBL/GenBank/DDBJ databases">
        <title>Genome-wide discovery and analysis of human seven transmembrane helix receptor genes.</title>
        <authorList>
            <person name="Suwa M."/>
            <person name="Sato T."/>
            <person name="Okouchi I."/>
            <person name="Arita M."/>
            <person name="Futami K."/>
            <person name="Matsumoto S."/>
            <person name="Tsutsumi S."/>
            <person name="Aburatani H."/>
            <person name="Asai K."/>
            <person name="Akiyama Y."/>
        </authorList>
    </citation>
    <scope>NUCLEOTIDE SEQUENCE [GENOMIC DNA] (ISOFORM 3)</scope>
</reference>
<reference key="12">
    <citation type="submission" date="1998-02" db="EMBL/GenBank/DDBJ databases">
        <authorList>
            <person name="Kidd K.K."/>
        </authorList>
    </citation>
    <scope>NUCLEOTIDE SEQUENCE (ISOFORM 1)</scope>
</reference>
<reference key="13">
    <citation type="journal article" date="2004" name="Genome Res.">
        <title>The status, quality, and expansion of the NIH full-length cDNA project: the Mammalian Gene Collection (MGC).</title>
        <authorList>
            <consortium name="The MGC Project Team"/>
        </authorList>
    </citation>
    <scope>NUCLEOTIDE SEQUENCE [LARGE SCALE MRNA] (ISOFORM 1)</scope>
    <source>
        <tissue>Lung</tissue>
    </source>
</reference>
<reference key="14">
    <citation type="journal article" date="2005" name="Biochem. Pharmacol.">
        <title>Regulation of dense core vesicle release from PC12 cells by interaction between the D2 dopamine receptor and calcium-dependent activator protein for secretion (CAPS).</title>
        <authorList>
            <person name="Binda A.V."/>
            <person name="Kabbani N."/>
            <person name="Levenson R."/>
        </authorList>
    </citation>
    <scope>INTERACTION WITH CADPS AND CADPS2</scope>
</reference>
<reference key="15">
    <citation type="journal article" date="2007" name="J. Cell Sci.">
        <title>Role of a Galphai2 protein splice variant in the formation of an intracellular dopamine D2 receptor pool.</title>
        <authorList>
            <person name="Lopez-Aranda M.F."/>
            <person name="Acevedo M.J."/>
            <person name="Gutierrez A."/>
            <person name="Koulen P."/>
            <person name="Khan Z.U."/>
        </authorList>
    </citation>
    <scope>INTERACTION WITH GNAI2</scope>
</reference>
<reference key="16">
    <citation type="journal article" date="2011" name="Biochem. Biophys. Res. Commun.">
        <title>Dopamine D2 and D4 receptor heteromerization and its allosteric receptor-receptor interactions.</title>
        <authorList>
            <person name="Borroto-Escuela D.O."/>
            <person name="Van Craenenbroeck K."/>
            <person name="Romero-Fernandez W."/>
            <person name="Guidolin D."/>
            <person name="Woods A.S."/>
            <person name="Rivera A."/>
            <person name="Haegeman G."/>
            <person name="Agnati L.F."/>
            <person name="Tarakanov A.O."/>
            <person name="Fuxe K."/>
        </authorList>
    </citation>
    <scope>HOMOOLIGOMERIZATION</scope>
    <scope>INTERACTION WITH DRD4</scope>
</reference>
<reference key="17">
    <citation type="journal article" date="2011" name="Neuropharmacology">
        <title>Functional crosstalk and heteromerization of serotonin 5-HT2A and dopamine D2 receptors.</title>
        <authorList>
            <person name="Albizu L."/>
            <person name="Holloway T."/>
            <person name="Gonzalez-Maeso J."/>
            <person name="Sealfon S.C."/>
        </authorList>
    </citation>
    <scope>INTERACTION WITH HTR2A</scope>
    <scope>FUNCTION</scope>
    <scope>SUBCELLULAR LOCATION</scope>
</reference>
<reference key="18">
    <citation type="journal article" date="2007" name="Proc. Natl. Acad. Sci. U.S.A.">
        <title>Structural basis for nucleotide exchange on G alpha i subunits and receptor coupling specificity.</title>
        <authorList>
            <person name="Johnston C.A."/>
            <person name="Siderovski D.P."/>
        </authorList>
    </citation>
    <scope>RETRACTED PAPER</scope>
</reference>
<reference key="19">
    <citation type="journal article" date="2012" name="Proc. Natl. Acad. Sci. U.S.A.">
        <authorList>
            <person name="Johnston C.A."/>
            <person name="Siderovski D.P."/>
        </authorList>
    </citation>
    <scope>RETRACTION NOTICE OF PUBMED:17264214</scope>
</reference>
<reference key="20">
    <citation type="journal article" date="2015" name="PLoS ONE">
        <title>Effect of C-Terminal S-Palmitoylation on D2 Dopamine Receptor Trafficking and Stability.</title>
        <authorList>
            <person name="Ebersole B."/>
            <person name="Petko J."/>
            <person name="Woll M."/>
            <person name="Murakami S."/>
            <person name="Sokolina K."/>
            <person name="Wong V."/>
            <person name="Stagljar I."/>
            <person name="Luescher B."/>
            <person name="Levenson R."/>
        </authorList>
    </citation>
    <scope>SUBCELLULAR LOCATION</scope>
    <scope>PALMITOYLATION AT CYS-443</scope>
    <scope>MUTAGENESIS OF CYS-126; CYS-244; CYS-253 AND CYS-443</scope>
</reference>
<reference evidence="19" key="21">
    <citation type="journal article" date="2015" name="J. Biol. Chem.">
        <title>Neuronal Calcium Sensor-1 Binds the D2 Dopamine Receptor and G-protein-coupled Receptor Kinase 1 (GRK1) Peptides Using Different Modes of Interactions.</title>
        <authorList>
            <person name="Pandalaneni S."/>
            <person name="Karuppiah V."/>
            <person name="Saleem M."/>
            <person name="Haynes L.P."/>
            <person name="Burgoyne R.D."/>
            <person name="Mayans O."/>
            <person name="Derrick J.P."/>
            <person name="Lian L.Y."/>
        </authorList>
    </citation>
    <scope>X-RAY CRYSTALLOGRAPHY (2.19 ANGSTROMS) OF 430-443 IN COMPLEX WITH NCS1</scope>
</reference>
<reference evidence="20" key="22">
    <citation type="journal article" date="2018" name="Nature">
        <title>Structure of the D2 dopamine receptor bound to the atypical antipsychotic drug risperidone.</title>
        <authorList>
            <person name="Wang S."/>
            <person name="Che T."/>
            <person name="Levit A."/>
            <person name="Shoichet B.K."/>
            <person name="Wacker D."/>
            <person name="Roth B.L."/>
        </authorList>
    </citation>
    <scope>X-RAY CRYSTALLOGRAPHY (2.87 ANGSTROMS) OF 35-222 AND 363-443 IN COMPLEX WITH INVERSE AGONIST RISPERIDONE</scope>
    <scope>DISULFIDE BONDS</scope>
</reference>
<reference key="23">
    <citation type="journal article" date="1993" name="Biochem. Biophys. Res. Commun.">
        <title>A structural polymorphism of human dopamine D2 receptor, D2(Ser311-&gt;Cys).</title>
        <authorList>
            <person name="Itokawa M."/>
            <person name="Arinami T."/>
            <person name="Futamura N."/>
            <person name="Hamaguchi H."/>
            <person name="Toru M."/>
        </authorList>
    </citation>
    <scope>VARIANT CYS-311</scope>
</reference>
<reference key="24">
    <citation type="journal article" date="1999" name="Proc. Natl. Acad. Sci. U.S.A.">
        <title>Association of a missense change in the D2 dopamine receptor with myoclonus dystonia.</title>
        <authorList>
            <person name="Klein C."/>
            <person name="Brin M.F."/>
            <person name="Kramer P."/>
            <person name="Sena-Esteves M."/>
            <person name="de Leon D."/>
            <person name="Doheny D."/>
            <person name="Bressman S."/>
            <person name="Fahn S."/>
            <person name="Breakefield X.O."/>
            <person name="Ozelius L.J."/>
        </authorList>
    </citation>
    <scope>VARIANT ILE-154</scope>
</reference>
<reference key="25">
    <citation type="journal article" date="2005" name="Am. J. Med. Genet. B Neuropsychiatr. Genet.">
        <title>Association of the -141C Del variant of the dopamine D2 receptor (DRD2) with positive family history and suicidality in German alcoholics.</title>
        <authorList>
            <person name="Johann M."/>
            <person name="Putzhammer A."/>
            <person name="Eichhammer P."/>
            <person name="Wodarz N."/>
        </authorList>
    </citation>
    <scope>INVOLVEMENT IN SUSCEPTIBILITY TO ALCOHOLISM</scope>
</reference>
<reference key="26">
    <citation type="journal article" date="2000" name="Ann. Neurol.">
        <title>Evaluation of the role of the D2 dopamine receptor in myoclonus dystonia.</title>
        <authorList>
            <person name="Klein C."/>
            <person name="Gurvich N."/>
            <person name="Sena-Esteves M."/>
            <person name="Bressman S."/>
            <person name="Brin M.F."/>
            <person name="Ebersole B.J."/>
            <person name="Fink S."/>
            <person name="Forsgren L."/>
            <person name="Friedman J."/>
            <person name="Grimes D."/>
            <person name="Holmgren G."/>
            <person name="Kyllerman M."/>
            <person name="Lang A.E."/>
            <person name="de Leon D."/>
            <person name="Leung J."/>
            <person name="Prioleau C."/>
            <person name="Raymond D."/>
            <person name="Sanner G."/>
            <person name="Saunders-Pullman R."/>
            <person name="Vieregge P."/>
            <person name="Wahlstrom J."/>
            <person name="Breakefield X.O."/>
            <person name="Kramer P.L."/>
            <person name="Ozelius L.J."/>
            <person name="Sealfon S.C."/>
        </authorList>
    </citation>
    <scope>CHARACTERIZATION OF VARIANT ILE-154</scope>
</reference>
<reference key="27">
    <citation type="journal article" date="2010" name="Nature">
        <title>A population-specific HTR2B stop codon predisposes to severe impulsivity.</title>
        <authorList>
            <person name="Bevilacqua L."/>
            <person name="Doly S."/>
            <person name="Kaprio J."/>
            <person name="Yuan Q."/>
            <person name="Tikkanen R."/>
            <person name="Paunio T."/>
            <person name="Zhou Z."/>
            <person name="Wedenoja J."/>
            <person name="Maroteaux L."/>
            <person name="Diaz S."/>
            <person name="Belmer A."/>
            <person name="Hodgkinson C.A."/>
            <person name="Dell'osso L."/>
            <person name="Suvisaari J."/>
            <person name="Coccaro E."/>
            <person name="Rose R.J."/>
            <person name="Peltonen L."/>
            <person name="Virkkunen M."/>
            <person name="Goldman D."/>
        </authorList>
    </citation>
    <scope>VARIANT GLU-327</scope>
</reference>
<dbReference type="EMBL" id="M30625">
    <property type="protein sequence ID" value="AAA88024.1"/>
    <property type="molecule type" value="mRNA"/>
</dbReference>
<dbReference type="EMBL" id="X51645">
    <property type="protein sequence ID" value="CAB56463.1"/>
    <property type="molecule type" value="mRNA"/>
</dbReference>
<dbReference type="EMBL" id="X51646">
    <property type="protein sequence ID" value="CAB37869.1"/>
    <property type="molecule type" value="Genomic_DNA"/>
</dbReference>
<dbReference type="EMBL" id="X51362">
    <property type="protein sequence ID" value="CAA35746.1"/>
    <property type="molecule type" value="mRNA"/>
</dbReference>
<dbReference type="EMBL" id="M29066">
    <property type="protein sequence ID" value="AAA52761.1"/>
    <property type="molecule type" value="mRNA"/>
</dbReference>
<dbReference type="EMBL" id="S62137">
    <property type="protein sequence ID" value="AAB26819.1"/>
    <property type="molecule type" value="mRNA"/>
</dbReference>
<dbReference type="EMBL" id="S69899">
    <property type="protein sequence ID" value="AAB20571.1"/>
    <property type="molecule type" value="mRNA"/>
</dbReference>
<dbReference type="EMBL" id="S58589">
    <property type="protein sequence ID" value="AAB26274.1"/>
    <property type="molecule type" value="Genomic_DNA"/>
</dbReference>
<dbReference type="EMBL" id="S58577">
    <property type="protein sequence ID" value="AAB26274.1"/>
    <property type="status" value="JOINED"/>
    <property type="molecule type" value="Genomic_DNA"/>
</dbReference>
<dbReference type="EMBL" id="S58584">
    <property type="protein sequence ID" value="AAB26274.1"/>
    <property type="status" value="JOINED"/>
    <property type="molecule type" value="Genomic_DNA"/>
</dbReference>
<dbReference type="EMBL" id="S58586">
    <property type="protein sequence ID" value="AAB26274.1"/>
    <property type="status" value="JOINED"/>
    <property type="molecule type" value="Genomic_DNA"/>
</dbReference>
<dbReference type="EMBL" id="S58588">
    <property type="protein sequence ID" value="AAB26274.1"/>
    <property type="status" value="JOINED"/>
    <property type="molecule type" value="Genomic_DNA"/>
</dbReference>
<dbReference type="EMBL" id="AF176812">
    <property type="protein sequence ID" value="AAF61479.1"/>
    <property type="molecule type" value="mRNA"/>
</dbReference>
<dbReference type="EMBL" id="AB065860">
    <property type="protein sequence ID" value="BAC06078.1"/>
    <property type="molecule type" value="Genomic_DNA"/>
</dbReference>
<dbReference type="EMBL" id="AF050737">
    <property type="protein sequence ID" value="AAC78779.1"/>
    <property type="molecule type" value="Genomic_DNA"/>
</dbReference>
<dbReference type="EMBL" id="BC021195">
    <property type="protein sequence ID" value="AAH21195.1"/>
    <property type="molecule type" value="mRNA"/>
</dbReference>
<dbReference type="CCDS" id="CCDS8361.1">
    <molecule id="P14416-1"/>
</dbReference>
<dbReference type="CCDS" id="CCDS8362.1">
    <molecule id="P14416-2"/>
</dbReference>
<dbReference type="PIR" id="S08417">
    <property type="entry name" value="DYHUD2"/>
</dbReference>
<dbReference type="RefSeq" id="NP_000786.1">
    <molecule id="P14416-1"/>
    <property type="nucleotide sequence ID" value="NM_000795.4"/>
</dbReference>
<dbReference type="RefSeq" id="NP_057658.2">
    <molecule id="P14416-2"/>
    <property type="nucleotide sequence ID" value="NM_016574.3"/>
</dbReference>
<dbReference type="RefSeq" id="XP_016872785.1">
    <molecule id="P14416-1"/>
    <property type="nucleotide sequence ID" value="XM_017017296.3"/>
</dbReference>
<dbReference type="RefSeq" id="XP_047282467.1">
    <molecule id="P14416-2"/>
    <property type="nucleotide sequence ID" value="XM_047426511.1"/>
</dbReference>
<dbReference type="RefSeq" id="XP_054223910.1">
    <molecule id="P14416-1"/>
    <property type="nucleotide sequence ID" value="XM_054367935.1"/>
</dbReference>
<dbReference type="RefSeq" id="XP_054223911.1">
    <molecule id="P14416-2"/>
    <property type="nucleotide sequence ID" value="XM_054367936.1"/>
</dbReference>
<dbReference type="PDB" id="5AER">
    <property type="method" value="X-ray"/>
    <property type="resolution" value="2.19 A"/>
    <property type="chains" value="B/C=430-443"/>
</dbReference>
<dbReference type="PDB" id="6CM4">
    <property type="method" value="X-ray"/>
    <property type="resolution" value="2.87 A"/>
    <property type="chains" value="A=35-222, A=363-443"/>
</dbReference>
<dbReference type="PDB" id="6LUQ">
    <property type="method" value="X-ray"/>
    <property type="resolution" value="3.10 A"/>
    <property type="chains" value="A=35-222, A=367-443"/>
</dbReference>
<dbReference type="PDB" id="6VMS">
    <property type="method" value="EM"/>
    <property type="resolution" value="3.80 A"/>
    <property type="chains" value="R=29-443"/>
</dbReference>
<dbReference type="PDB" id="7DFP">
    <property type="method" value="X-ray"/>
    <property type="resolution" value="3.10 A"/>
    <property type="chains" value="A=34-238, A=364-443"/>
</dbReference>
<dbReference type="PDB" id="7JVR">
    <property type="method" value="EM"/>
    <property type="resolution" value="2.80 A"/>
    <property type="chains" value="R=1-443"/>
</dbReference>
<dbReference type="PDB" id="8IRS">
    <property type="method" value="EM"/>
    <property type="resolution" value="3.00 A"/>
    <property type="chains" value="R=1-443"/>
</dbReference>
<dbReference type="PDB" id="8TZQ">
    <property type="method" value="EM"/>
    <property type="resolution" value="3.20 A"/>
    <property type="chains" value="R=1-443"/>
</dbReference>
<dbReference type="PDB" id="8U02">
    <property type="method" value="EM"/>
    <property type="resolution" value="3.28 A"/>
    <property type="chains" value="R=1-443"/>
</dbReference>
<dbReference type="PDBsum" id="5AER"/>
<dbReference type="PDBsum" id="6CM4"/>
<dbReference type="PDBsum" id="6LUQ"/>
<dbReference type="PDBsum" id="6VMS"/>
<dbReference type="PDBsum" id="7DFP"/>
<dbReference type="PDBsum" id="7JVR"/>
<dbReference type="PDBsum" id="8IRS"/>
<dbReference type="PDBsum" id="8TZQ"/>
<dbReference type="PDBsum" id="8U02"/>
<dbReference type="EMDB" id="EMD-21243"/>
<dbReference type="EMDB" id="EMD-22511"/>
<dbReference type="EMDB" id="EMD-35684"/>
<dbReference type="EMDB" id="EMD-41766"/>
<dbReference type="EMDB" id="EMD-41776"/>
<dbReference type="SMR" id="P14416"/>
<dbReference type="BioGRID" id="108147">
    <property type="interactions" value="99"/>
</dbReference>
<dbReference type="CORUM" id="P14416"/>
<dbReference type="DIP" id="DIP-5977N"/>
<dbReference type="FunCoup" id="P14416">
    <property type="interactions" value="928"/>
</dbReference>
<dbReference type="IntAct" id="P14416">
    <property type="interactions" value="82"/>
</dbReference>
<dbReference type="MINT" id="P14416"/>
<dbReference type="STRING" id="9606.ENSP00000354859"/>
<dbReference type="BindingDB" id="P14416"/>
<dbReference type="ChEMBL" id="CHEMBL217"/>
<dbReference type="DrugBank" id="DB01614">
    <property type="generic name" value="Acepromazine"/>
</dbReference>
<dbReference type="DrugBank" id="DB01063">
    <property type="generic name" value="Acetophenazine"/>
</dbReference>
<dbReference type="DrugBank" id="DB01425">
    <property type="generic name" value="Alizapride"/>
</dbReference>
<dbReference type="DrugBank" id="DB00915">
    <property type="generic name" value="Amantadine"/>
</dbReference>
<dbReference type="DrugBank" id="DB06288">
    <property type="generic name" value="Amisulpride"/>
</dbReference>
<dbReference type="DrugBank" id="DB05964">
    <property type="generic name" value="Amitifadine"/>
</dbReference>
<dbReference type="DrugBank" id="DB00543">
    <property type="generic name" value="Amoxapine"/>
</dbReference>
<dbReference type="DrugBank" id="DB00182">
    <property type="generic name" value="Amphetamine"/>
</dbReference>
<dbReference type="DrugBank" id="DB04599">
    <property type="generic name" value="Aniracetam"/>
</dbReference>
<dbReference type="DrugBank" id="DB06620">
    <property type="generic name" value="Aplindore"/>
</dbReference>
<dbReference type="DrugBank" id="DB00714">
    <property type="generic name" value="Apomorphine"/>
</dbReference>
<dbReference type="DrugBank" id="DB01238">
    <property type="generic name" value="Aripiprazole"/>
</dbReference>
<dbReference type="DrugBank" id="DB14185">
    <property type="generic name" value="Aripiprazole lauroxil"/>
</dbReference>
<dbReference type="DrugBank" id="DB09207">
    <property type="generic name" value="AS-8112"/>
</dbReference>
<dbReference type="DrugBank" id="DB06216">
    <property type="generic name" value="Asenapine"/>
</dbReference>
<dbReference type="DrugBank" id="DB11376">
    <property type="generic name" value="Azaperone"/>
</dbReference>
<dbReference type="DrugBank" id="DB01295">
    <property type="generic name" value="Bevantolol"/>
</dbReference>
<dbReference type="DrugBank" id="DB04889">
    <property type="generic name" value="Bicifadine"/>
</dbReference>
<dbReference type="DrugBank" id="DB04888">
    <property type="generic name" value="Bifeprunox"/>
</dbReference>
<dbReference type="DrugBank" id="DB05687">
    <property type="generic name" value="BL-1020"/>
</dbReference>
<dbReference type="DrugBank" id="DB09223">
    <property type="generic name" value="Blonanserin"/>
</dbReference>
<dbReference type="DrugBank" id="DB04857">
    <property type="generic name" value="Brasofensine"/>
</dbReference>
<dbReference type="DrugBank" id="DB09128">
    <property type="generic name" value="Brexpiprazole"/>
</dbReference>
<dbReference type="DrugBank" id="DB01200">
    <property type="generic name" value="Bromocriptine"/>
</dbReference>
<dbReference type="DrugBank" id="DB09018">
    <property type="generic name" value="Bromopride"/>
</dbReference>
<dbReference type="DrugBank" id="DB00490">
    <property type="generic name" value="Buspirone"/>
</dbReference>
<dbReference type="DrugBank" id="DB00248">
    <property type="generic name" value="Cabergoline"/>
</dbReference>
<dbReference type="DrugBank" id="DB06016">
    <property type="generic name" value="Cariprazine"/>
</dbReference>
<dbReference type="DrugBank" id="DB01038">
    <property type="generic name" value="Carphenazine"/>
</dbReference>
<dbReference type="DrugBank" id="DB00477">
    <property type="generic name" value="Chlorpromazine"/>
</dbReference>
<dbReference type="DrugBank" id="DB01239">
    <property type="generic name" value="Chlorprothixene"/>
</dbReference>
<dbReference type="DrugBank" id="DB00568">
    <property type="generic name" value="Cinnarizine"/>
</dbReference>
<dbReference type="DrugBank" id="DB13511">
    <property type="generic name" value="Clebopride"/>
</dbReference>
<dbReference type="DrugBank" id="DB15971">
    <property type="generic name" value="Clorotepine"/>
</dbReference>
<dbReference type="DrugBank" id="DB00363">
    <property type="generic name" value="Clozapine"/>
</dbReference>
<dbReference type="DrugBank" id="DB00298">
    <property type="generic name" value="Dapiprazole"/>
</dbReference>
<dbReference type="DrugBank" id="DB06421">
    <property type="generic name" value="Declopramide"/>
</dbReference>
<dbReference type="DrugBank" id="DB01151">
    <property type="generic name" value="Desipramine"/>
</dbReference>
<dbReference type="DrugBank" id="DB11274">
    <property type="generic name" value="Dihydro-alpha-ergocryptine"/>
</dbReference>
<dbReference type="DrugBank" id="DB13345">
    <property type="generic name" value="Dihydroergocristine"/>
</dbReference>
<dbReference type="DrugBank" id="DB00320">
    <property type="generic name" value="Dihydroergotamine"/>
</dbReference>
<dbReference type="DrugBank" id="DB16602">
    <property type="generic name" value="Dihydroergotoxine"/>
</dbReference>
<dbReference type="DrugBank" id="DB18046">
    <property type="generic name" value="Docarpamine"/>
</dbReference>
<dbReference type="DrugBank" id="DB01184">
    <property type="generic name" value="Domperidone"/>
</dbReference>
<dbReference type="DrugBank" id="DB00988">
    <property type="generic name" value="Dopamine"/>
</dbReference>
<dbReference type="DrugBank" id="DB12313">
    <property type="generic name" value="Dopexamine"/>
</dbReference>
<dbReference type="DrugBank" id="DB14844">
    <property type="generic name" value="Dordaviprone"/>
</dbReference>
<dbReference type="DrugBank" id="DB00450">
    <property type="generic name" value="Droperidol"/>
</dbReference>
<dbReference type="DrugBank" id="DB01364">
    <property type="generic name" value="Ephedrine"/>
</dbReference>
<dbReference type="DrugBank" id="DB11275">
    <property type="generic name" value="Epicriptine"/>
</dbReference>
<dbReference type="DrugBank" id="DB01049">
    <property type="generic name" value="Ergoloid mesylate"/>
</dbReference>
<dbReference type="DrugBank" id="DB01253">
    <property type="generic name" value="Ergometrine"/>
</dbReference>
<dbReference type="DrugBank" id="DB00696">
    <property type="generic name" value="Ergotamine"/>
</dbReference>
<dbReference type="DrugBank" id="DB01175">
    <property type="generic name" value="Escitalopram"/>
</dbReference>
<dbReference type="DrugBank" id="DB15492">
    <property type="generic name" value="Eticlopride"/>
</dbReference>
<dbReference type="DrugBank" id="DB09194">
    <property type="generic name" value="Etoperidone"/>
</dbReference>
<dbReference type="DrugBank" id="DB01463">
    <property type="generic name" value="Fencamfamin"/>
</dbReference>
<dbReference type="DrugBank" id="DB13665">
    <property type="generic name" value="Fluanisone"/>
</dbReference>
<dbReference type="DrugBank" id="DB00875">
    <property type="generic name" value="Flupentixol"/>
</dbReference>
<dbReference type="DrugBank" id="DB00623">
    <property type="generic name" value="Fluphenazine"/>
</dbReference>
<dbReference type="DrugBank" id="DB04842">
    <property type="generic name" value="Fluspirilene"/>
</dbReference>
<dbReference type="DrugBank" id="DB00502">
    <property type="generic name" value="Haloperidol"/>
</dbReference>
<dbReference type="DrugBank" id="DB04946">
    <property type="generic name" value="Iloperidone"/>
</dbReference>
<dbReference type="DrugBank" id="DB00458">
    <property type="generic name" value="Imipramine"/>
</dbReference>
<dbReference type="DrugBank" id="DB04924">
    <property type="generic name" value="Itopride"/>
</dbReference>
<dbReference type="DrugBank" id="DB12579">
    <property type="generic name" value="JNJ-37822681"/>
</dbReference>
<dbReference type="DrugBank" id="DB01221">
    <property type="generic name" value="Ketamine"/>
</dbReference>
<dbReference type="DrugBank" id="DB00555">
    <property type="generic name" value="Lamotrigine"/>
</dbReference>
<dbReference type="DrugBank" id="DB01235">
    <property type="generic name" value="Levodopa"/>
</dbReference>
<dbReference type="DrugBank" id="DB00589">
    <property type="generic name" value="Lisuride"/>
</dbReference>
<dbReference type="DrugBank" id="DB00408">
    <property type="generic name" value="Loxapine"/>
</dbReference>
<dbReference type="DrugBank" id="DB06077">
    <property type="generic name" value="Lumateperone"/>
</dbReference>
<dbReference type="DrugBank" id="DB08815">
    <property type="generic name" value="Lurasidone"/>
</dbReference>
<dbReference type="DrugBank" id="DB00934">
    <property type="generic name" value="Maprotiline"/>
</dbReference>
<dbReference type="DrugBank" id="DB09224">
    <property type="generic name" value="Melperone"/>
</dbReference>
<dbReference type="DrugBank" id="DB01043">
    <property type="generic name" value="Memantine"/>
</dbReference>
<dbReference type="DrugBank" id="DB01365">
    <property type="generic name" value="Mephentermine"/>
</dbReference>
<dbReference type="DrugBank" id="DB00933">
    <property type="generic name" value="Mesoridazine"/>
</dbReference>
<dbReference type="DrugBank" id="DB01577">
    <property type="generic name" value="Metamfetamine"/>
</dbReference>
<dbReference type="DrugBank" id="DB00610">
    <property type="generic name" value="Metaraminol"/>
</dbReference>
<dbReference type="DrugBank" id="DB01403">
    <property type="generic name" value="Methotrimeprazine"/>
</dbReference>
<dbReference type="DrugBank" id="DB00968">
    <property type="generic name" value="Methyldopa"/>
</dbReference>
<dbReference type="DrugBank" id="DB01233">
    <property type="generic name" value="Metoclopramide"/>
</dbReference>
<dbReference type="DrugBank" id="DB06148">
    <property type="generic name" value="Mianserin"/>
</dbReference>
<dbReference type="DrugBank" id="DB00805">
    <property type="generic name" value="Minaprine"/>
</dbReference>
<dbReference type="DrugBank" id="DB01618">
    <property type="generic name" value="Molindone"/>
</dbReference>
<dbReference type="DrugBank" id="DB08804">
    <property type="generic name" value="Nandrolone decanoate"/>
</dbReference>
<dbReference type="DrugBank" id="DB06711">
    <property type="generic name" value="Naphazoline"/>
</dbReference>
<dbReference type="DrugBank" id="DB19314">
    <property type="generic name" value="Nemonapride"/>
</dbReference>
<dbReference type="DrugBank" id="DB04821">
    <property type="generic name" value="Nomifensine"/>
</dbReference>
<dbReference type="DrugBank" id="DB05766">
    <property type="generic name" value="Norclozapine"/>
</dbReference>
<dbReference type="DrugBank" id="DB00540">
    <property type="generic name" value="Nortriptyline"/>
</dbReference>
<dbReference type="DrugBank" id="DB06229">
    <property type="generic name" value="Ocaperidone"/>
</dbReference>
<dbReference type="DrugBank" id="DB00334">
    <property type="generic name" value="Olanzapine"/>
</dbReference>
<dbReference type="DrugBank" id="DB01267">
    <property type="generic name" value="Paliperidone"/>
</dbReference>
<dbReference type="DrugBank" id="DB12061">
    <property type="generic name" value="Pardoprunox"/>
</dbReference>
<dbReference type="DrugBank" id="DB00715">
    <property type="generic name" value="Paroxetine"/>
</dbReference>
<dbReference type="DrugBank" id="DB12710">
    <property type="generic name" value="Perazine"/>
</dbReference>
<dbReference type="DrugBank" id="DB01186">
    <property type="generic name" value="Pergolide"/>
</dbReference>
<dbReference type="DrugBank" id="DB08922">
    <property type="generic name" value="Perospirone"/>
</dbReference>
<dbReference type="DrugBank" id="DB00850">
    <property type="generic name" value="Perphenazine"/>
</dbReference>
<dbReference type="DrugBank" id="DB12998">
    <property type="generic name" value="PF-00217830"/>
</dbReference>
<dbReference type="DrugBank" id="DB00925">
    <property type="generic name" value="Phenoxybenzamine"/>
</dbReference>
<dbReference type="DrugBank" id="DB00692">
    <property type="generic name" value="Phentolamine"/>
</dbReference>
<dbReference type="DrugBank" id="DB00388">
    <property type="generic name" value="Phenylephrine"/>
</dbReference>
<dbReference type="DrugBank" id="DB11160">
    <property type="generic name" value="Phenyltoloxamine"/>
</dbReference>
<dbReference type="DrugBank" id="DB01100">
    <property type="generic name" value="Pimozide"/>
</dbReference>
<dbReference type="DrugBank" id="DB09286">
    <property type="generic name" value="Pipamperone"/>
</dbReference>
<dbReference type="DrugBank" id="DB06808">
    <property type="generic name" value="Piperacetazine"/>
</dbReference>
<dbReference type="DrugBank" id="DB01621">
    <property type="generic name" value="Pipotiazine"/>
</dbReference>
<dbReference type="DrugBank" id="DB12478">
    <property type="generic name" value="Piribedil"/>
</dbReference>
<dbReference type="DrugBank" id="DB00413">
    <property type="generic name" value="Pramipexole"/>
</dbReference>
<dbReference type="DrugBank" id="DB11947">
    <property type="generic name" value="Pridopidine"/>
</dbReference>
<dbReference type="DrugBank" id="DB00433">
    <property type="generic name" value="Prochlorperazine"/>
</dbReference>
<dbReference type="DrugBank" id="DB00420">
    <property type="generic name" value="Promazine"/>
</dbReference>
<dbReference type="DrugBank" id="DB01069">
    <property type="generic name" value="Promethazine"/>
</dbReference>
<dbReference type="DrugBank" id="DB00777">
    <property type="generic name" value="Propiomazine"/>
</dbReference>
<dbReference type="DrugBank" id="DB00852">
    <property type="generic name" value="Pseudoephedrine"/>
</dbReference>
<dbReference type="DrugBank" id="DB01224">
    <property type="generic name" value="Quetiapine"/>
</dbReference>
<dbReference type="DrugBank" id="DB09097">
    <property type="generic name" value="Quinagolide"/>
</dbReference>
<dbReference type="DrugBank" id="DB12518">
    <property type="generic name" value="Raclopride"/>
</dbReference>
<dbReference type="DrugBank" id="DB00409">
    <property type="generic name" value="Remoxipride"/>
</dbReference>
<dbReference type="DrugBank" id="DB00734">
    <property type="generic name" value="Risperidone"/>
</dbReference>
<dbReference type="DrugBank" id="DB01549">
    <property type="generic name" value="Rolicyclidine"/>
</dbReference>
<dbReference type="DrugBank" id="DB00268">
    <property type="generic name" value="Ropinirole"/>
</dbReference>
<dbReference type="DrugBank" id="DB05271">
    <property type="generic name" value="Rotigotine"/>
</dbReference>
<dbReference type="DrugBank" id="DB16927">
    <property type="generic name" value="S-Apomorphine"/>
</dbReference>
<dbReference type="DrugBank" id="DB06454">
    <property type="generic name" value="Sarizotan"/>
</dbReference>
<dbReference type="DrugBank" id="DB06144">
    <property type="generic name" value="Sertindole"/>
</dbReference>
<dbReference type="DrugBank" id="DB17056">
    <property type="generic name" value="Spiperone"/>
</dbReference>
<dbReference type="DrugBank" id="DB00391">
    <property type="generic name" value="Sulpiride"/>
</dbReference>
<dbReference type="DrugBank" id="DB06477">
    <property type="generic name" value="Sumanirole"/>
</dbReference>
<dbReference type="DrugBank" id="DB04844">
    <property type="generic name" value="Tetrabenazine"/>
</dbReference>
<dbReference type="DrugBank" id="DB12093">
    <property type="generic name" value="Tetrahydropalmatine"/>
</dbReference>
<dbReference type="DrugBank" id="DB00372">
    <property type="generic name" value="Thiethylperazine"/>
</dbReference>
<dbReference type="DrugBank" id="DB01622">
    <property type="generic name" value="Thioproperazine"/>
</dbReference>
<dbReference type="DrugBank" id="DB00679">
    <property type="generic name" value="Thioridazine"/>
</dbReference>
<dbReference type="DrugBank" id="DB01623">
    <property type="generic name" value="Thiothixene"/>
</dbReference>
<dbReference type="DrugBank" id="DB13025">
    <property type="generic name" value="Tiapride"/>
</dbReference>
<dbReference type="DrugBank" id="DB00797">
    <property type="generic name" value="Tolazoline"/>
</dbReference>
<dbReference type="DrugBank" id="DB18794">
    <property type="generic name" value="Trazpiroben"/>
</dbReference>
<dbReference type="DrugBank" id="DB00831">
    <property type="generic name" value="Trifluoperazine"/>
</dbReference>
<dbReference type="DrugBank" id="DB00508">
    <property type="generic name" value="Triflupromazine"/>
</dbReference>
<dbReference type="DrugBank" id="DB00662">
    <property type="generic name" value="Trimethobenzamide"/>
</dbReference>
<dbReference type="DrugBank" id="DB00726">
    <property type="generic name" value="Trimipramine"/>
</dbReference>
<dbReference type="DrugBank" id="DB06109">
    <property type="generic name" value="YKP-1358"/>
</dbReference>
<dbReference type="DrugBank" id="DB01392">
    <property type="generic name" value="Yohimbine"/>
</dbReference>
<dbReference type="DrugBank" id="DB12188">
    <property type="generic name" value="Zicronapine"/>
</dbReference>
<dbReference type="DrugBank" id="DB00246">
    <property type="generic name" value="Ziprasidone"/>
</dbReference>
<dbReference type="DrugBank" id="DB09225">
    <property type="generic name" value="Zotepine"/>
</dbReference>
<dbReference type="DrugBank" id="DB01624">
    <property type="generic name" value="Zuclopenthixol"/>
</dbReference>
<dbReference type="DrugCentral" id="P14416"/>
<dbReference type="GuidetoPHARMACOLOGY" id="215"/>
<dbReference type="TCDB" id="9.A.14.3.10">
    <property type="family name" value="the g-protein-coupled receptor (gpcr) family"/>
</dbReference>
<dbReference type="GlyCosmos" id="P14416">
    <property type="glycosylation" value="3 sites, No reported glycans"/>
</dbReference>
<dbReference type="GlyGen" id="P14416">
    <property type="glycosylation" value="3 sites"/>
</dbReference>
<dbReference type="iPTMnet" id="P14416"/>
<dbReference type="PhosphoSitePlus" id="P14416"/>
<dbReference type="SwissPalm" id="P14416"/>
<dbReference type="BioMuta" id="DRD2"/>
<dbReference type="DMDM" id="118206"/>
<dbReference type="MassIVE" id="P14416"/>
<dbReference type="PaxDb" id="9606-ENSP00000354859"/>
<dbReference type="PeptideAtlas" id="P14416"/>
<dbReference type="ProteomicsDB" id="53055">
    <molecule id="P14416-3"/>
</dbReference>
<dbReference type="ABCD" id="P14416">
    <property type="antibodies" value="2 sequenced antibodies"/>
</dbReference>
<dbReference type="Antibodypedia" id="2801">
    <property type="antibodies" value="358 antibodies from 41 providers"/>
</dbReference>
<dbReference type="DNASU" id="1813"/>
<dbReference type="Ensembl" id="ENST00000346454.7">
    <molecule id="P14416-2"/>
    <property type="protein sequence ID" value="ENSP00000278597.5"/>
    <property type="gene ID" value="ENSG00000149295.14"/>
</dbReference>
<dbReference type="Ensembl" id="ENST00000362072.8">
    <molecule id="P14416-1"/>
    <property type="protein sequence ID" value="ENSP00000354859.3"/>
    <property type="gene ID" value="ENSG00000149295.14"/>
</dbReference>
<dbReference type="Ensembl" id="ENST00000538967.5">
    <molecule id="P14416-3"/>
    <property type="protein sequence ID" value="ENSP00000438215.1"/>
    <property type="gene ID" value="ENSG00000149295.14"/>
</dbReference>
<dbReference type="Ensembl" id="ENST00000542968.5">
    <molecule id="P14416-1"/>
    <property type="protein sequence ID" value="ENSP00000442172.1"/>
    <property type="gene ID" value="ENSG00000149295.14"/>
</dbReference>
<dbReference type="GeneID" id="1813"/>
<dbReference type="KEGG" id="hsa:1813"/>
<dbReference type="MANE-Select" id="ENST00000362072.8">
    <property type="protein sequence ID" value="ENSP00000354859.3"/>
    <property type="RefSeq nucleotide sequence ID" value="NM_000795.4"/>
    <property type="RefSeq protein sequence ID" value="NP_000786.1"/>
</dbReference>
<dbReference type="UCSC" id="uc001pnz.4">
    <molecule id="P14416-1"/>
    <property type="organism name" value="human"/>
</dbReference>
<dbReference type="AGR" id="HGNC:3023"/>
<dbReference type="CTD" id="1813"/>
<dbReference type="DisGeNET" id="1813"/>
<dbReference type="GeneCards" id="DRD2"/>
<dbReference type="HGNC" id="HGNC:3023">
    <property type="gene designation" value="DRD2"/>
</dbReference>
<dbReference type="HPA" id="ENSG00000149295">
    <property type="expression patterns" value="Group enriched (brain, pituitary gland)"/>
</dbReference>
<dbReference type="MalaCards" id="DRD2"/>
<dbReference type="MIM" id="103780">
    <property type="type" value="phenotype"/>
</dbReference>
<dbReference type="MIM" id="126450">
    <property type="type" value="gene"/>
</dbReference>
<dbReference type="neXtProt" id="NX_P14416"/>
<dbReference type="OpenTargets" id="ENSG00000149295"/>
<dbReference type="Orphanet" id="36899">
    <property type="disease" value="Myoclonus-dystonia syndrome"/>
</dbReference>
<dbReference type="PharmGKB" id="PA27478"/>
<dbReference type="VEuPathDB" id="HostDB:ENSG00000149295"/>
<dbReference type="eggNOG" id="KOG3656">
    <property type="taxonomic scope" value="Eukaryota"/>
</dbReference>
<dbReference type="GeneTree" id="ENSGT00940000155539"/>
<dbReference type="HOGENOM" id="CLU_009579_11_1_1"/>
<dbReference type="InParanoid" id="P14416"/>
<dbReference type="OMA" id="TPLKGNC"/>
<dbReference type="OrthoDB" id="10034726at2759"/>
<dbReference type="PAN-GO" id="P14416">
    <property type="GO annotations" value="14 GO annotations based on evolutionary models"/>
</dbReference>
<dbReference type="PhylomeDB" id="P14416"/>
<dbReference type="TreeFam" id="TF334382"/>
<dbReference type="PathwayCommons" id="P14416"/>
<dbReference type="Reactome" id="R-HSA-390651">
    <property type="pathway name" value="Dopamine receptors"/>
</dbReference>
<dbReference type="SignaLink" id="P14416"/>
<dbReference type="SIGNOR" id="P14416"/>
<dbReference type="BioGRID-ORCS" id="1813">
    <property type="hits" value="13 hits in 1171 CRISPR screens"/>
</dbReference>
<dbReference type="ChiTaRS" id="DRD2">
    <property type="organism name" value="human"/>
</dbReference>
<dbReference type="EvolutionaryTrace" id="P14416"/>
<dbReference type="GeneWiki" id="Dopamine_receptor_D2"/>
<dbReference type="GenomeRNAi" id="1813"/>
<dbReference type="Pharos" id="P14416">
    <property type="development level" value="Tclin"/>
</dbReference>
<dbReference type="PRO" id="PR:P14416"/>
<dbReference type="Proteomes" id="UP000005640">
    <property type="component" value="Chromosome 11"/>
</dbReference>
<dbReference type="RNAct" id="P14416">
    <property type="molecule type" value="protein"/>
</dbReference>
<dbReference type="Bgee" id="ENSG00000149295">
    <property type="expression patterns" value="Expressed in putamen and 123 other cell types or tissues"/>
</dbReference>
<dbReference type="ExpressionAtlas" id="P14416">
    <property type="expression patterns" value="baseline and differential"/>
</dbReference>
<dbReference type="GO" id="GO:0001669">
    <property type="term" value="C:acrosomal vesicle"/>
    <property type="evidence" value="ECO:0007669"/>
    <property type="project" value="Ensembl"/>
</dbReference>
<dbReference type="GO" id="GO:0030424">
    <property type="term" value="C:axon"/>
    <property type="evidence" value="ECO:0000250"/>
    <property type="project" value="BHF-UCL"/>
</dbReference>
<dbReference type="GO" id="GO:0043679">
    <property type="term" value="C:axon terminus"/>
    <property type="evidence" value="ECO:0007669"/>
    <property type="project" value="Ensembl"/>
</dbReference>
<dbReference type="GO" id="GO:0060170">
    <property type="term" value="C:ciliary membrane"/>
    <property type="evidence" value="ECO:0000314"/>
    <property type="project" value="SYSCILIA_CCNET"/>
</dbReference>
<dbReference type="GO" id="GO:0005929">
    <property type="term" value="C:cilium"/>
    <property type="evidence" value="ECO:0000314"/>
    <property type="project" value="MGI"/>
</dbReference>
<dbReference type="GO" id="GO:0030425">
    <property type="term" value="C:dendrite"/>
    <property type="evidence" value="ECO:0000250"/>
    <property type="project" value="BHF-UCL"/>
</dbReference>
<dbReference type="GO" id="GO:0043197">
    <property type="term" value="C:dendritic spine"/>
    <property type="evidence" value="ECO:0007669"/>
    <property type="project" value="Ensembl"/>
</dbReference>
<dbReference type="GO" id="GO:0098691">
    <property type="term" value="C:dopaminergic synapse"/>
    <property type="evidence" value="ECO:0007669"/>
    <property type="project" value="Ensembl"/>
</dbReference>
<dbReference type="GO" id="GO:0030139">
    <property type="term" value="C:endocytic vesicle"/>
    <property type="evidence" value="ECO:0007669"/>
    <property type="project" value="Ensembl"/>
</dbReference>
<dbReference type="GO" id="GO:0097648">
    <property type="term" value="C:G protein-coupled receptor complex"/>
    <property type="evidence" value="ECO:0000314"/>
    <property type="project" value="ARUK-UCL"/>
</dbReference>
<dbReference type="GO" id="GO:0098982">
    <property type="term" value="C:GABA-ergic synapse"/>
    <property type="evidence" value="ECO:0007669"/>
    <property type="project" value="Ensembl"/>
</dbReference>
<dbReference type="GO" id="GO:0098978">
    <property type="term" value="C:glutamatergic synapse"/>
    <property type="evidence" value="ECO:0000318"/>
    <property type="project" value="GO_Central"/>
</dbReference>
<dbReference type="GO" id="GO:0000139">
    <property type="term" value="C:Golgi membrane"/>
    <property type="evidence" value="ECO:0007669"/>
    <property type="project" value="UniProtKB-SubCell"/>
</dbReference>
<dbReference type="GO" id="GO:0016328">
    <property type="term" value="C:lateral plasma membrane"/>
    <property type="evidence" value="ECO:0007669"/>
    <property type="project" value="Ensembl"/>
</dbReference>
<dbReference type="GO" id="GO:0097730">
    <property type="term" value="C:non-motile cilium"/>
    <property type="evidence" value="ECO:0000314"/>
    <property type="project" value="SYSCILIA_CCNET"/>
</dbReference>
<dbReference type="GO" id="GO:0043204">
    <property type="term" value="C:perikaryon"/>
    <property type="evidence" value="ECO:0007669"/>
    <property type="project" value="Ensembl"/>
</dbReference>
<dbReference type="GO" id="GO:0005886">
    <property type="term" value="C:plasma membrane"/>
    <property type="evidence" value="ECO:0000314"/>
    <property type="project" value="BHF-UCL"/>
</dbReference>
<dbReference type="GO" id="GO:0045211">
    <property type="term" value="C:postsynaptic membrane"/>
    <property type="evidence" value="ECO:0007669"/>
    <property type="project" value="Ensembl"/>
</dbReference>
<dbReference type="GO" id="GO:0042734">
    <property type="term" value="C:presynaptic membrane"/>
    <property type="evidence" value="ECO:0000318"/>
    <property type="project" value="GO_Central"/>
</dbReference>
<dbReference type="GO" id="GO:0036126">
    <property type="term" value="C:sperm flagellum"/>
    <property type="evidence" value="ECO:0007669"/>
    <property type="project" value="Ensembl"/>
</dbReference>
<dbReference type="GO" id="GO:0045202">
    <property type="term" value="C:synapse"/>
    <property type="evidence" value="ECO:0007669"/>
    <property type="project" value="GOC"/>
</dbReference>
<dbReference type="GO" id="GO:0030672">
    <property type="term" value="C:synaptic vesicle membrane"/>
    <property type="evidence" value="ECO:0007669"/>
    <property type="project" value="Ensembl"/>
</dbReference>
<dbReference type="GO" id="GO:0035240">
    <property type="term" value="F:dopamine binding"/>
    <property type="evidence" value="ECO:0007669"/>
    <property type="project" value="Ensembl"/>
</dbReference>
<dbReference type="GO" id="GO:0001591">
    <property type="term" value="F:dopamine neurotransmitter receptor activity, coupled via Gi/Go"/>
    <property type="evidence" value="ECO:0000314"/>
    <property type="project" value="BHF-UCL"/>
</dbReference>
<dbReference type="GO" id="GO:0004930">
    <property type="term" value="F:G protein-coupled receptor activity"/>
    <property type="evidence" value="ECO:0000318"/>
    <property type="project" value="GO_Central"/>
</dbReference>
<dbReference type="GO" id="GO:0001965">
    <property type="term" value="F:G-protein alpha-subunit binding"/>
    <property type="evidence" value="ECO:0000353"/>
    <property type="project" value="ARUK-UCL"/>
</dbReference>
<dbReference type="GO" id="GO:1901363">
    <property type="term" value="F:heterocyclic compound binding"/>
    <property type="evidence" value="ECO:0007669"/>
    <property type="project" value="Ensembl"/>
</dbReference>
<dbReference type="GO" id="GO:0032795">
    <property type="term" value="F:heterotrimeric G-protein binding"/>
    <property type="evidence" value="ECO:0000314"/>
    <property type="project" value="ARUK-UCL"/>
</dbReference>
<dbReference type="GO" id="GO:0042802">
    <property type="term" value="F:identical protein binding"/>
    <property type="evidence" value="ECO:0000353"/>
    <property type="project" value="IntAct"/>
</dbReference>
<dbReference type="GO" id="GO:0035255">
    <property type="term" value="F:ionotropic glutamate receptor binding"/>
    <property type="evidence" value="ECO:0007669"/>
    <property type="project" value="Ensembl"/>
</dbReference>
<dbReference type="GO" id="GO:0015459">
    <property type="term" value="F:potassium channel regulator activity"/>
    <property type="evidence" value="ECO:0000303"/>
    <property type="project" value="BHF-UCL"/>
</dbReference>
<dbReference type="GO" id="GO:0046717">
    <property type="term" value="P:acid secretion"/>
    <property type="evidence" value="ECO:0007669"/>
    <property type="project" value="Ensembl"/>
</dbReference>
<dbReference type="GO" id="GO:0021984">
    <property type="term" value="P:adenohypophysis development"/>
    <property type="evidence" value="ECO:0000250"/>
    <property type="project" value="BHF-UCL"/>
</dbReference>
<dbReference type="GO" id="GO:0007195">
    <property type="term" value="P:adenylate cyclase-inhibiting dopamine receptor signaling pathway"/>
    <property type="evidence" value="ECO:0000314"/>
    <property type="project" value="BHF-UCL"/>
</dbReference>
<dbReference type="GO" id="GO:0007628">
    <property type="term" value="P:adult walking behavior"/>
    <property type="evidence" value="ECO:0000250"/>
    <property type="project" value="BHF-UCL"/>
</dbReference>
<dbReference type="GO" id="GO:0050482">
    <property type="term" value="P:arachidonate secretion"/>
    <property type="evidence" value="ECO:0000314"/>
    <property type="project" value="BHF-UCL"/>
</dbReference>
<dbReference type="GO" id="GO:0008306">
    <property type="term" value="P:associative learning"/>
    <property type="evidence" value="ECO:0000250"/>
    <property type="project" value="BHF-UCL"/>
</dbReference>
<dbReference type="GO" id="GO:0031223">
    <property type="term" value="P:auditory behavior"/>
    <property type="evidence" value="ECO:0007669"/>
    <property type="project" value="Ensembl"/>
</dbReference>
<dbReference type="GO" id="GO:0006914">
    <property type="term" value="P:autophagy"/>
    <property type="evidence" value="ECO:0007669"/>
    <property type="project" value="Ensembl"/>
</dbReference>
<dbReference type="GO" id="GO:0007409">
    <property type="term" value="P:axonogenesis"/>
    <property type="evidence" value="ECO:0000250"/>
    <property type="project" value="BHF-UCL"/>
</dbReference>
<dbReference type="GO" id="GO:0048148">
    <property type="term" value="P:behavioral response to cocaine"/>
    <property type="evidence" value="ECO:0000250"/>
    <property type="project" value="BHF-UCL"/>
</dbReference>
<dbReference type="GO" id="GO:0048149">
    <property type="term" value="P:behavioral response to ethanol"/>
    <property type="evidence" value="ECO:0000250"/>
    <property type="project" value="BHF-UCL"/>
</dbReference>
<dbReference type="GO" id="GO:0048755">
    <property type="term" value="P:branching morphogenesis of a nerve"/>
    <property type="evidence" value="ECO:0000250"/>
    <property type="project" value="BHF-UCL"/>
</dbReference>
<dbReference type="GO" id="GO:0071361">
    <property type="term" value="P:cellular response to ethanol"/>
    <property type="evidence" value="ECO:0007669"/>
    <property type="project" value="Ensembl"/>
</dbReference>
<dbReference type="GO" id="GO:0071300">
    <property type="term" value="P:cellular response to retinoic acid"/>
    <property type="evidence" value="ECO:0007669"/>
    <property type="project" value="Ensembl"/>
</dbReference>
<dbReference type="GO" id="GO:0021853">
    <property type="term" value="P:cerebral cortex GABAergic interneuron migration"/>
    <property type="evidence" value="ECO:0000250"/>
    <property type="project" value="BHF-UCL"/>
</dbReference>
<dbReference type="GO" id="GO:0032922">
    <property type="term" value="P:circadian regulation of gene expression"/>
    <property type="evidence" value="ECO:0000250"/>
    <property type="project" value="BHF-UCL"/>
</dbReference>
<dbReference type="GO" id="GO:0042417">
    <property type="term" value="P:dopamine metabolic process"/>
    <property type="evidence" value="ECO:0000305"/>
    <property type="project" value="BHF-UCL"/>
</dbReference>
<dbReference type="GO" id="GO:0051583">
    <property type="term" value="P:dopamine uptake involved in synaptic transmission"/>
    <property type="evidence" value="ECO:0007669"/>
    <property type="project" value="Ensembl"/>
</dbReference>
<dbReference type="GO" id="GO:0042756">
    <property type="term" value="P:drinking behavior"/>
    <property type="evidence" value="ECO:0007669"/>
    <property type="project" value="Ensembl"/>
</dbReference>
<dbReference type="GO" id="GO:0050673">
    <property type="term" value="P:epithelial cell proliferation"/>
    <property type="evidence" value="ECO:0007669"/>
    <property type="project" value="Ensembl"/>
</dbReference>
<dbReference type="GO" id="GO:0060079">
    <property type="term" value="P:excitatory postsynaptic potential"/>
    <property type="evidence" value="ECO:0000303"/>
    <property type="project" value="ParkinsonsUK-UCL"/>
</dbReference>
<dbReference type="GO" id="GO:0002031">
    <property type="term" value="P:G protein-coupled receptor internalization"/>
    <property type="evidence" value="ECO:0007669"/>
    <property type="project" value="Ensembl"/>
</dbReference>
<dbReference type="GO" id="GO:0007625">
    <property type="term" value="P:grooming behavior"/>
    <property type="evidence" value="ECO:0007669"/>
    <property type="project" value="Ensembl"/>
</dbReference>
<dbReference type="GO" id="GO:1990384">
    <property type="term" value="P:hyaloid vascular plexus regression"/>
    <property type="evidence" value="ECO:0000250"/>
    <property type="project" value="UniProtKB"/>
</dbReference>
<dbReference type="GO" id="GO:0006874">
    <property type="term" value="P:intracellular calcium ion homeostasis"/>
    <property type="evidence" value="ECO:0000314"/>
    <property type="project" value="BHF-UCL"/>
</dbReference>
<dbReference type="GO" id="GO:0035556">
    <property type="term" value="P:intracellular signal transduction"/>
    <property type="evidence" value="ECO:0000314"/>
    <property type="project" value="BHF-UCL"/>
</dbReference>
<dbReference type="GO" id="GO:0007626">
    <property type="term" value="P:locomotory behavior"/>
    <property type="evidence" value="ECO:0000250"/>
    <property type="project" value="BHF-UCL"/>
</dbReference>
<dbReference type="GO" id="GO:0007616">
    <property type="term" value="P:long-term memory"/>
    <property type="evidence" value="ECO:0007669"/>
    <property type="project" value="Ensembl"/>
</dbReference>
<dbReference type="GO" id="GO:0045776">
    <property type="term" value="P:negative regulation of blood pressure"/>
    <property type="evidence" value="ECO:0000250"/>
    <property type="project" value="BHF-UCL"/>
</dbReference>
<dbReference type="GO" id="GO:0030336">
    <property type="term" value="P:negative regulation of cell migration"/>
    <property type="evidence" value="ECO:0000250"/>
    <property type="project" value="BHF-UCL"/>
</dbReference>
<dbReference type="GO" id="GO:0008285">
    <property type="term" value="P:negative regulation of cell population proliferation"/>
    <property type="evidence" value="ECO:0000250"/>
    <property type="project" value="BHF-UCL"/>
</dbReference>
<dbReference type="GO" id="GO:1900038">
    <property type="term" value="P:negative regulation of cellular response to hypoxia"/>
    <property type="evidence" value="ECO:0007669"/>
    <property type="project" value="Ensembl"/>
</dbReference>
<dbReference type="GO" id="GO:0042321">
    <property type="term" value="P:negative regulation of circadian sleep/wake cycle, sleep"/>
    <property type="evidence" value="ECO:0007669"/>
    <property type="project" value="Ensembl"/>
</dbReference>
<dbReference type="GO" id="GO:0051481">
    <property type="term" value="P:negative regulation of cytosolic calcium ion concentration"/>
    <property type="evidence" value="ECO:0000318"/>
    <property type="project" value="GO_Central"/>
</dbReference>
<dbReference type="GO" id="GO:0035305">
    <property type="term" value="P:negative regulation of dephosphorylation"/>
    <property type="evidence" value="ECO:0007669"/>
    <property type="project" value="Ensembl"/>
</dbReference>
<dbReference type="GO" id="GO:0060160">
    <property type="term" value="P:negative regulation of dopamine receptor signaling pathway"/>
    <property type="evidence" value="ECO:0000250"/>
    <property type="project" value="BHF-UCL"/>
</dbReference>
<dbReference type="GO" id="GO:0033602">
    <property type="term" value="P:negative regulation of dopamine secretion"/>
    <property type="evidence" value="ECO:0007669"/>
    <property type="project" value="Ensembl"/>
</dbReference>
<dbReference type="GO" id="GO:0050680">
    <property type="term" value="P:negative regulation of epithelial cell proliferation"/>
    <property type="evidence" value="ECO:0007669"/>
    <property type="project" value="Ensembl"/>
</dbReference>
<dbReference type="GO" id="GO:0045824">
    <property type="term" value="P:negative regulation of innate immune response"/>
    <property type="evidence" value="ECO:0007669"/>
    <property type="project" value="Ensembl"/>
</dbReference>
<dbReference type="GO" id="GO:0046676">
    <property type="term" value="P:negative regulation of insulin secretion"/>
    <property type="evidence" value="ECO:0007669"/>
    <property type="project" value="Ensembl"/>
</dbReference>
<dbReference type="GO" id="GO:2001223">
    <property type="term" value="P:negative regulation of neuron migration"/>
    <property type="evidence" value="ECO:0007669"/>
    <property type="project" value="Ensembl"/>
</dbReference>
<dbReference type="GO" id="GO:0051898">
    <property type="term" value="P:negative regulation of phosphatidylinositol 3-kinase/protein kinase B signal transduction"/>
    <property type="evidence" value="ECO:0000250"/>
    <property type="project" value="BHF-UCL"/>
</dbReference>
<dbReference type="GO" id="GO:0050709">
    <property type="term" value="P:negative regulation of protein secretion"/>
    <property type="evidence" value="ECO:0000314"/>
    <property type="project" value="BHF-UCL"/>
</dbReference>
<dbReference type="GO" id="GO:0051967">
    <property type="term" value="P:negative regulation of synaptic transmission, glutamatergic"/>
    <property type="evidence" value="ECO:0000250"/>
    <property type="project" value="BHF-UCL"/>
</dbReference>
<dbReference type="GO" id="GO:0001976">
    <property type="term" value="P:nervous system process involved in regulation of systemic arterial blood pressure"/>
    <property type="evidence" value="ECO:0000250"/>
    <property type="project" value="BHF-UCL"/>
</dbReference>
<dbReference type="GO" id="GO:0007405">
    <property type="term" value="P:neuroblast proliferation"/>
    <property type="evidence" value="ECO:0007669"/>
    <property type="project" value="Ensembl"/>
</dbReference>
<dbReference type="GO" id="GO:0007270">
    <property type="term" value="P:neuron-neuron synaptic transmission"/>
    <property type="evidence" value="ECO:0000250"/>
    <property type="project" value="BHF-UCL"/>
</dbReference>
<dbReference type="GO" id="GO:0021769">
    <property type="term" value="P:orbitofrontal cortex development"/>
    <property type="evidence" value="ECO:0007669"/>
    <property type="project" value="Ensembl"/>
</dbReference>
<dbReference type="GO" id="GO:0030432">
    <property type="term" value="P:peristalsis"/>
    <property type="evidence" value="ECO:0000250"/>
    <property type="project" value="BHF-UCL"/>
</dbReference>
<dbReference type="GO" id="GO:0043491">
    <property type="term" value="P:phosphatidylinositol 3-kinase/protein kinase B signal transduction"/>
    <property type="evidence" value="ECO:0007669"/>
    <property type="project" value="Ensembl"/>
</dbReference>
<dbReference type="GO" id="GO:0060158">
    <property type="term" value="P:phospholipase C-activating dopamine receptor signaling pathway"/>
    <property type="evidence" value="ECO:0000316"/>
    <property type="project" value="MGI"/>
</dbReference>
<dbReference type="GO" id="GO:0007200">
    <property type="term" value="P:phospholipase C-activating G protein-coupled receptor signaling pathway"/>
    <property type="evidence" value="ECO:0000314"/>
    <property type="project" value="BHF-UCL"/>
</dbReference>
<dbReference type="GO" id="GO:0043473">
    <property type="term" value="P:pigmentation"/>
    <property type="evidence" value="ECO:0007669"/>
    <property type="project" value="Ensembl"/>
</dbReference>
<dbReference type="GO" id="GO:0032467">
    <property type="term" value="P:positive regulation of cytokinesis"/>
    <property type="evidence" value="ECO:0000315"/>
    <property type="project" value="UniProtKB"/>
</dbReference>
<dbReference type="GO" id="GO:0051586">
    <property type="term" value="P:positive regulation of dopamine uptake involved in synaptic transmission"/>
    <property type="evidence" value="ECO:0000250"/>
    <property type="project" value="BHF-UCL"/>
</dbReference>
<dbReference type="GO" id="GO:0070374">
    <property type="term" value="P:positive regulation of ERK1 and ERK2 cascade"/>
    <property type="evidence" value="ECO:0007669"/>
    <property type="project" value="Ensembl"/>
</dbReference>
<dbReference type="GO" id="GO:0045745">
    <property type="term" value="P:positive regulation of G protein-coupled receptor signaling pathway"/>
    <property type="evidence" value="ECO:0007669"/>
    <property type="project" value="Ensembl"/>
</dbReference>
<dbReference type="GO" id="GO:1900168">
    <property type="term" value="P:positive regulation of glial cell-derived neurotrophic factor production"/>
    <property type="evidence" value="ECO:0000314"/>
    <property type="project" value="CACAO"/>
</dbReference>
<dbReference type="GO" id="GO:0060124">
    <property type="term" value="P:positive regulation of growth hormone secretion"/>
    <property type="evidence" value="ECO:0000250"/>
    <property type="project" value="BHF-UCL"/>
</dbReference>
<dbReference type="GO" id="GO:1900273">
    <property type="term" value="P:positive regulation of long-term synaptic potentiation"/>
    <property type="evidence" value="ECO:0007669"/>
    <property type="project" value="Ensembl"/>
</dbReference>
<dbReference type="GO" id="GO:0040018">
    <property type="term" value="P:positive regulation of multicellular organism growth"/>
    <property type="evidence" value="ECO:0007669"/>
    <property type="project" value="Ensembl"/>
</dbReference>
<dbReference type="GO" id="GO:0002052">
    <property type="term" value="P:positive regulation of neuroblast proliferation"/>
    <property type="evidence" value="ECO:0000250"/>
    <property type="project" value="BHF-UCL"/>
</dbReference>
<dbReference type="GO" id="GO:0002092">
    <property type="term" value="P:positive regulation of receptor internalization"/>
    <property type="evidence" value="ECO:0007669"/>
    <property type="project" value="Ensembl"/>
</dbReference>
<dbReference type="GO" id="GO:0035815">
    <property type="term" value="P:positive regulation of renal sodium excretion"/>
    <property type="evidence" value="ECO:0007669"/>
    <property type="project" value="Ensembl"/>
</dbReference>
<dbReference type="GO" id="GO:0045944">
    <property type="term" value="P:positive regulation of transcription by RNA polymerase II"/>
    <property type="evidence" value="ECO:0007669"/>
    <property type="project" value="Ensembl"/>
</dbReference>
<dbReference type="GO" id="GO:0035810">
    <property type="term" value="P:positive regulation of urine volume"/>
    <property type="evidence" value="ECO:0007669"/>
    <property type="project" value="Ensembl"/>
</dbReference>
<dbReference type="GO" id="GO:0099170">
    <property type="term" value="P:postsynaptic modulation of chemical synaptic transmission"/>
    <property type="evidence" value="ECO:0007669"/>
    <property type="project" value="Ensembl"/>
</dbReference>
<dbReference type="GO" id="GO:0060134">
    <property type="term" value="P:prepulse inhibition"/>
    <property type="evidence" value="ECO:0000250"/>
    <property type="project" value="BHF-UCL"/>
</dbReference>
<dbReference type="GO" id="GO:0099171">
    <property type="term" value="P:presynaptic modulation of chemical synaptic transmission"/>
    <property type="evidence" value="ECO:0007669"/>
    <property type="project" value="Ensembl"/>
</dbReference>
<dbReference type="GO" id="GO:0008104">
    <property type="term" value="P:protein localization"/>
    <property type="evidence" value="ECO:0000250"/>
    <property type="project" value="BHF-UCL"/>
</dbReference>
<dbReference type="GO" id="GO:0014059">
    <property type="term" value="P:regulation of dopamine secretion"/>
    <property type="evidence" value="ECO:0000318"/>
    <property type="project" value="GO_Central"/>
</dbReference>
<dbReference type="GO" id="GO:0051584">
    <property type="term" value="P:regulation of dopamine uptake involved in synaptic transmission"/>
    <property type="evidence" value="ECO:0000305"/>
    <property type="project" value="BHF-UCL"/>
</dbReference>
<dbReference type="GO" id="GO:0002027">
    <property type="term" value="P:regulation of heart rate"/>
    <property type="evidence" value="ECO:0000250"/>
    <property type="project" value="BHF-UCL"/>
</dbReference>
<dbReference type="GO" id="GO:0090325">
    <property type="term" value="P:regulation of locomotion involved in locomotory behavior"/>
    <property type="evidence" value="ECO:0007669"/>
    <property type="project" value="Ensembl"/>
</dbReference>
<dbReference type="GO" id="GO:0048169">
    <property type="term" value="P:regulation of long-term neuronal synaptic plasticity"/>
    <property type="evidence" value="ECO:0000250"/>
    <property type="project" value="BHF-UCL"/>
</dbReference>
<dbReference type="GO" id="GO:0043266">
    <property type="term" value="P:regulation of potassium ion transport"/>
    <property type="evidence" value="ECO:0000250"/>
    <property type="project" value="BHF-UCL"/>
</dbReference>
<dbReference type="GO" id="GO:0002028">
    <property type="term" value="P:regulation of sodium ion transport"/>
    <property type="evidence" value="ECO:0000250"/>
    <property type="project" value="BHF-UCL"/>
</dbReference>
<dbReference type="GO" id="GO:0051823">
    <property type="term" value="P:regulation of synapse structural plasticity"/>
    <property type="evidence" value="ECO:0007669"/>
    <property type="project" value="Ensembl"/>
</dbReference>
<dbReference type="GO" id="GO:0032228">
    <property type="term" value="P:regulation of synaptic transmission, GABAergic"/>
    <property type="evidence" value="ECO:0000250"/>
    <property type="project" value="BHF-UCL"/>
</dbReference>
<dbReference type="GO" id="GO:0051209">
    <property type="term" value="P:release of sequestered calcium ion into cytosol"/>
    <property type="evidence" value="ECO:0000250"/>
    <property type="project" value="BHF-UCL"/>
</dbReference>
<dbReference type="GO" id="GO:0001975">
    <property type="term" value="P:response to amphetamine"/>
    <property type="evidence" value="ECO:0000250"/>
    <property type="project" value="BHF-UCL"/>
</dbReference>
<dbReference type="GO" id="GO:0048678">
    <property type="term" value="P:response to axon injury"/>
    <property type="evidence" value="ECO:0007669"/>
    <property type="project" value="Ensembl"/>
</dbReference>
<dbReference type="GO" id="GO:0042220">
    <property type="term" value="P:response to cocaine"/>
    <property type="evidence" value="ECO:0000250"/>
    <property type="project" value="BHF-UCL"/>
</dbReference>
<dbReference type="GO" id="GO:0032355">
    <property type="term" value="P:response to estradiol"/>
    <property type="evidence" value="ECO:0007669"/>
    <property type="project" value="Ensembl"/>
</dbReference>
<dbReference type="GO" id="GO:0034776">
    <property type="term" value="P:response to histamine"/>
    <property type="evidence" value="ECO:0000314"/>
    <property type="project" value="BHF-UCL"/>
</dbReference>
<dbReference type="GO" id="GO:0001666">
    <property type="term" value="P:response to hypoxia"/>
    <property type="evidence" value="ECO:0007669"/>
    <property type="project" value="Ensembl"/>
</dbReference>
<dbReference type="GO" id="GO:0014854">
    <property type="term" value="P:response to inactivity"/>
    <property type="evidence" value="ECO:0007669"/>
    <property type="project" value="Ensembl"/>
</dbReference>
<dbReference type="GO" id="GO:0010039">
    <property type="term" value="P:response to iron ion"/>
    <property type="evidence" value="ECO:0007669"/>
    <property type="project" value="Ensembl"/>
</dbReference>
<dbReference type="GO" id="GO:0009416">
    <property type="term" value="P:response to light stimulus"/>
    <property type="evidence" value="ECO:0000250"/>
    <property type="project" value="BHF-UCL"/>
</dbReference>
<dbReference type="GO" id="GO:0043278">
    <property type="term" value="P:response to morphine"/>
    <property type="evidence" value="ECO:0000250"/>
    <property type="project" value="BHF-UCL"/>
</dbReference>
<dbReference type="GO" id="GO:0035094">
    <property type="term" value="P:response to nicotine"/>
    <property type="evidence" value="ECO:0007669"/>
    <property type="project" value="Ensembl"/>
</dbReference>
<dbReference type="GO" id="GO:0009636">
    <property type="term" value="P:response to toxic substance"/>
    <property type="evidence" value="ECO:0007669"/>
    <property type="project" value="Ensembl"/>
</dbReference>
<dbReference type="GO" id="GO:0009410">
    <property type="term" value="P:response to xenobiotic stimulus"/>
    <property type="evidence" value="ECO:0000250"/>
    <property type="project" value="BHF-UCL"/>
</dbReference>
<dbReference type="GO" id="GO:0007608">
    <property type="term" value="P:sensory perception of smell"/>
    <property type="evidence" value="ECO:0000250"/>
    <property type="project" value="BHF-UCL"/>
</dbReference>
<dbReference type="GO" id="GO:0021756">
    <property type="term" value="P:striatum development"/>
    <property type="evidence" value="ECO:0007669"/>
    <property type="project" value="Ensembl"/>
</dbReference>
<dbReference type="GO" id="GO:0007416">
    <property type="term" value="P:synapse assembly"/>
    <property type="evidence" value="ECO:0000250"/>
    <property type="project" value="BHF-UCL"/>
</dbReference>
<dbReference type="GO" id="GO:0001659">
    <property type="term" value="P:temperature homeostasis"/>
    <property type="evidence" value="ECO:0000250"/>
    <property type="project" value="BHF-UCL"/>
</dbReference>
<dbReference type="GO" id="GO:0008542">
    <property type="term" value="P:visual learning"/>
    <property type="evidence" value="ECO:0000250"/>
    <property type="project" value="BHF-UCL"/>
</dbReference>
<dbReference type="GO" id="GO:0016055">
    <property type="term" value="P:Wnt signaling pathway"/>
    <property type="evidence" value="ECO:0007669"/>
    <property type="project" value="Ensembl"/>
</dbReference>
<dbReference type="CDD" id="cd15309">
    <property type="entry name" value="7tmA_D2_dopamine_R"/>
    <property type="match status" value="1"/>
</dbReference>
<dbReference type="FunFam" id="1.20.1070.10:FF:000099">
    <property type="entry name" value="D(2) dopamine receptor"/>
    <property type="match status" value="1"/>
</dbReference>
<dbReference type="FunFam" id="1.20.1070.10:FF:000086">
    <property type="entry name" value="Dopamine D2 receptor 2"/>
    <property type="match status" value="1"/>
</dbReference>
<dbReference type="Gene3D" id="1.20.1070.10">
    <property type="entry name" value="Rhodopsin 7-helix transmembrane proteins"/>
    <property type="match status" value="2"/>
</dbReference>
<dbReference type="InterPro" id="IPR001922">
    <property type="entry name" value="Dopamine_D2_rcpt"/>
</dbReference>
<dbReference type="InterPro" id="IPR000929">
    <property type="entry name" value="Dopamine_rcpt"/>
</dbReference>
<dbReference type="InterPro" id="IPR000276">
    <property type="entry name" value="GPCR_Rhodpsn"/>
</dbReference>
<dbReference type="InterPro" id="IPR017452">
    <property type="entry name" value="GPCR_Rhodpsn_7TM"/>
</dbReference>
<dbReference type="PANTHER" id="PTHR24248">
    <property type="entry name" value="ADRENERGIC RECEPTOR-RELATED G-PROTEIN COUPLED RECEPTOR"/>
    <property type="match status" value="1"/>
</dbReference>
<dbReference type="PANTHER" id="PTHR24248:SF87">
    <property type="entry name" value="D(2) DOPAMINE RECEPTOR"/>
    <property type="match status" value="1"/>
</dbReference>
<dbReference type="Pfam" id="PF00001">
    <property type="entry name" value="7tm_1"/>
    <property type="match status" value="1"/>
</dbReference>
<dbReference type="PRINTS" id="PR00567">
    <property type="entry name" value="DOPAMINED2R"/>
</dbReference>
<dbReference type="PRINTS" id="PR00242">
    <property type="entry name" value="DOPAMINER"/>
</dbReference>
<dbReference type="PRINTS" id="PR00237">
    <property type="entry name" value="GPCRRHODOPSN"/>
</dbReference>
<dbReference type="SMART" id="SM01381">
    <property type="entry name" value="7TM_GPCR_Srsx"/>
    <property type="match status" value="1"/>
</dbReference>
<dbReference type="SUPFAM" id="SSF81321">
    <property type="entry name" value="Family A G protein-coupled receptor-like"/>
    <property type="match status" value="1"/>
</dbReference>
<dbReference type="PROSITE" id="PS00237">
    <property type="entry name" value="G_PROTEIN_RECEP_F1_1"/>
    <property type="match status" value="1"/>
</dbReference>
<dbReference type="PROSITE" id="PS50262">
    <property type="entry name" value="G_PROTEIN_RECEP_F1_2"/>
    <property type="match status" value="1"/>
</dbReference>
<proteinExistence type="evidence at protein level"/>
<comment type="function">
    <text evidence="2 10">Dopamine receptor whose activity is mediated by G proteins which inhibit adenylyl cyclase (PubMed:21645528). Positively regulates postnatal regression of retinal hyaloid vessels via suppression of VEGFR2/KDR activity, downstream of OPN5 (By similarity).</text>
</comment>
<comment type="subunit">
    <text evidence="2 3">Forms homo- and heterooligomers with DRD4 (PubMed:21184734). The interaction with DRD4 may modulate agonist-induced downstream signaling (PubMed:21184734). Interacts with CADPS and CADPS2 (PubMed:15857609). Interacts with GPRASP1, PPP1R9B and CLIC6 (By similarity). Interacts with ARRB2 (By similarity). Interacts with HTR2A (PubMed:21645528). Interacts with GNAI2 isoform sGi2, the interaction allows the creation of an intracellular pool of DRD2 that can be released to cell surface upon agonist stimulation (PubMed:17550964). Interacts with DRD1 (By similarity). Interacts with KCNA2 (By similarity).</text>
</comment>
<comment type="interaction">
    <interactant intactId="EBI-2928178">
        <id>P14416</id>
    </interactant>
    <interactant intactId="EBI-529989">
        <id>Q9NRI5</id>
        <label>DISC1</label>
    </interactant>
    <organismsDiffer>false</organismsDiffer>
    <experiments>3</experiments>
</comment>
<comment type="interaction">
    <interactant intactId="EBI-2928178">
        <id>P14416</id>
    </interactant>
    <interactant intactId="EBI-2928178">
        <id>P14416</id>
        <label>DRD2</label>
    </interactant>
    <organismsDiffer>false</organismsDiffer>
    <experiments>9</experiments>
</comment>
<comment type="interaction">
    <interactant intactId="EBI-2928178">
        <id>P14416</id>
    </interactant>
    <interactant intactId="EBI-6661445">
        <id>Q01959</id>
        <label>SLC6A3</label>
    </interactant>
    <organismsDiffer>false</organismsDiffer>
    <experiments>4</experiments>
</comment>
<comment type="subcellular location">
    <subcellularLocation>
        <location evidence="10 12">Cell membrane</location>
        <topology evidence="4">Multi-pass membrane protein</topology>
    </subcellularLocation>
    <subcellularLocation>
        <location evidence="12">Golgi apparatus membrane</location>
        <topology evidence="4">Multi-pass membrane protein</topology>
    </subcellularLocation>
</comment>
<comment type="alternative products">
    <event type="alternative splicing"/>
    <isoform>
        <id>P14416-1</id>
        <name>1</name>
        <name>D2(Long)</name>
        <name>D2A</name>
        <sequence type="displayed"/>
    </isoform>
    <isoform>
        <id>P14416-2</id>
        <name>2</name>
        <name>D2(Short)</name>
        <name>D2B</name>
        <sequence type="described" ref="VSP_001870"/>
    </isoform>
    <isoform>
        <id>P14416-3</id>
        <name>3</name>
        <name>D2(Longer)</name>
        <sequence type="described" ref="VSP_026455"/>
    </isoform>
</comment>
<comment type="tissue specificity">
    <molecule>Isoform 1</molecule>
    <text evidence="11">Expressed in the anterior pituitary gland.</text>
</comment>
<comment type="tissue specificity">
    <molecule>Isoform 2</molecule>
    <text evidence="11">Expressed in the anterior pituitary gland.</text>
</comment>
<comment type="PTM">
    <text evidence="12">Palmitoylated. Palmitoylation which is required for proper localization to the plasma membrane and stability of the receptor could be carried on by ZDHHC4, ZDHHC3 and ZDHHC8.</text>
</comment>
<comment type="polymorphism">
    <text evidence="18">Genetic variations in DRD2 may determine the genetic susceptibility to alcoholism [MIM:103780]. Genetic variations in DRD2 might be a protective factor against the development of withdrawal symptoms but might also be a risk factor in a highly burdened subgroup of alcoholics with a paternal and grandpaternal history of alcoholism and might contribute to suicide risk in alcoholics.</text>
</comment>
<comment type="similarity">
    <text evidence="5">Belongs to the G-protein coupled receptor 1 family.</text>
</comment>
<feature type="chain" id="PRO_0000069387" description="D(2) dopamine receptor">
    <location>
        <begin position="1"/>
        <end position="443"/>
    </location>
</feature>
<feature type="topological domain" description="Extracellular" evidence="1">
    <location>
        <begin position="1"/>
        <end position="37"/>
    </location>
</feature>
<feature type="transmembrane region" description="Helical; Name=1" evidence="1">
    <location>
        <begin position="38"/>
        <end position="60"/>
    </location>
</feature>
<feature type="topological domain" description="Cytoplasmic" evidence="1">
    <location>
        <begin position="61"/>
        <end position="70"/>
    </location>
</feature>
<feature type="transmembrane region" description="Helical; Name=2" evidence="1">
    <location>
        <begin position="71"/>
        <end position="93"/>
    </location>
</feature>
<feature type="topological domain" description="Extracellular" evidence="1">
    <location>
        <begin position="94"/>
        <end position="108"/>
    </location>
</feature>
<feature type="transmembrane region" description="Helical; Name=3" evidence="1">
    <location>
        <begin position="109"/>
        <end position="130"/>
    </location>
</feature>
<feature type="topological domain" description="Cytoplasmic" evidence="1">
    <location>
        <begin position="131"/>
        <end position="151"/>
    </location>
</feature>
<feature type="transmembrane region" description="Helical; Name=4" evidence="1">
    <location>
        <begin position="152"/>
        <end position="172"/>
    </location>
</feature>
<feature type="topological domain" description="Extracellular" evidence="1">
    <location>
        <begin position="173"/>
        <end position="188"/>
    </location>
</feature>
<feature type="transmembrane region" description="Helical; Name=5" evidence="1">
    <location>
        <begin position="189"/>
        <end position="213"/>
    </location>
</feature>
<feature type="topological domain" description="Cytoplasmic" evidence="1">
    <location>
        <begin position="214"/>
        <end position="373"/>
    </location>
</feature>
<feature type="transmembrane region" description="Helical; Name=6" evidence="1">
    <location>
        <begin position="374"/>
        <end position="395"/>
    </location>
</feature>
<feature type="topological domain" description="Extracellular" evidence="1">
    <location>
        <begin position="396"/>
        <end position="409"/>
    </location>
</feature>
<feature type="transmembrane region" description="Helical; Name=7" evidence="1">
    <location>
        <begin position="410"/>
        <end position="431"/>
    </location>
</feature>
<feature type="topological domain" description="Cytoplasmic" evidence="1">
    <location>
        <begin position="432"/>
        <end position="443"/>
    </location>
</feature>
<feature type="region of interest" description="Interaction with PPP1R9B" evidence="1">
    <location>
        <begin position="211"/>
        <end position="373"/>
    </location>
</feature>
<feature type="region of interest" description="Disordered" evidence="6">
    <location>
        <begin position="281"/>
        <end position="332"/>
    </location>
</feature>
<feature type="compositionally biased region" description="Basic and acidic residues" evidence="6">
    <location>
        <begin position="323"/>
        <end position="332"/>
    </location>
</feature>
<feature type="site" description="Important for receptor activation" evidence="1">
    <location>
        <position position="194"/>
    </location>
</feature>
<feature type="site" description="Important for receptor activation" evidence="1">
    <location>
        <position position="197"/>
    </location>
</feature>
<feature type="lipid moiety-binding region" description="S-palmitoyl cysteine" evidence="12">
    <location>
        <position position="443"/>
    </location>
</feature>
<feature type="glycosylation site" description="N-linked (GlcNAc...) asparagine" evidence="4">
    <location>
        <position position="5"/>
    </location>
</feature>
<feature type="glycosylation site" description="N-linked (GlcNAc...) asparagine" evidence="4">
    <location>
        <position position="17"/>
    </location>
</feature>
<feature type="glycosylation site" description="N-linked (GlcNAc...) asparagine" evidence="4">
    <location>
        <position position="23"/>
    </location>
</feature>
<feature type="disulfide bond" evidence="13 20">
    <location>
        <begin position="107"/>
        <end position="182"/>
    </location>
</feature>
<feature type="disulfide bond" evidence="13 20">
    <location>
        <begin position="399"/>
        <end position="401"/>
    </location>
</feature>
<feature type="splice variant" id="VSP_001870" description="In isoform 2." evidence="16">
    <location>
        <begin position="242"/>
        <end position="270"/>
    </location>
</feature>
<feature type="splice variant" id="VSP_026455" description="In isoform 3." evidence="15">
    <original>V</original>
    <variation>VVQ</variation>
    <location>
        <position position="270"/>
    </location>
</feature>
<feature type="sequence variant" id="VAR_017143" description="Found in patients with alcohol-responsive myoclonus-dystonia; uncertain significance; the mutation does not affect functional properties; dbSNP:rs104894220." evidence="7 8">
    <original>V</original>
    <variation>I</variation>
    <location>
        <position position="154"/>
    </location>
</feature>
<feature type="sequence variant" id="VAR_014674" description="In dbSNP:rs1800496.">
    <original>P</original>
    <variation>S</variation>
    <location>
        <position position="310"/>
    </location>
</feature>
<feature type="sequence variant" id="VAR_003462" description="In dbSNP:rs1801028." evidence="14">
    <original>S</original>
    <variation>C</variation>
    <location>
        <position position="311"/>
    </location>
</feature>
<feature type="sequence variant" id="VAR_064579" description="In dbSNP:rs71653614." evidence="9">
    <original>K</original>
    <variation>E</variation>
    <location>
        <position position="327"/>
    </location>
</feature>
<feature type="mutagenesis site" description="No effect on palmitoylation; no effect on localization to the plasma membrane." evidence="12">
    <original>C</original>
    <variation>S</variation>
    <location>
        <position position="126"/>
    </location>
</feature>
<feature type="mutagenesis site" description="No effect on palmitoylation; no effect on localization to the plasma membrane." evidence="12">
    <original>C</original>
    <variation>S</variation>
    <location>
        <position position="244"/>
    </location>
</feature>
<feature type="mutagenesis site" description="No effect on palmitoylation; no effect on localization to the plasma membrane." evidence="12">
    <original>C</original>
    <variation>S</variation>
    <location>
        <position position="253"/>
    </location>
</feature>
<feature type="mutagenesis site" description="Decreased palmitoylation; decreased localization to the plasma membrane; decreased stability." evidence="12">
    <location>
        <position position="443"/>
    </location>
</feature>
<feature type="sequence conflict" description="In Ref. 7; AAB26819." evidence="17" ref="7">
    <original>L</original>
    <variation>R</variation>
    <location>
        <position position="40"/>
    </location>
</feature>
<feature type="helix" evidence="23">
    <location>
        <begin position="35"/>
        <end position="61"/>
    </location>
</feature>
<feature type="helix" evidence="22">
    <location>
        <begin position="63"/>
        <end position="65"/>
    </location>
</feature>
<feature type="helix" evidence="23">
    <location>
        <begin position="68"/>
        <end position="86"/>
    </location>
</feature>
<feature type="helix" evidence="23">
    <location>
        <begin position="88"/>
        <end position="97"/>
    </location>
</feature>
<feature type="helix" evidence="23">
    <location>
        <begin position="104"/>
        <end position="137"/>
    </location>
</feature>
<feature type="helix" evidence="23">
    <location>
        <begin position="139"/>
        <end position="143"/>
    </location>
</feature>
<feature type="helix" evidence="23">
    <location>
        <begin position="145"/>
        <end position="172"/>
    </location>
</feature>
<feature type="strand" evidence="23">
    <location>
        <begin position="179"/>
        <end position="181"/>
    </location>
</feature>
<feature type="helix" evidence="22">
    <location>
        <begin position="183"/>
        <end position="185"/>
    </location>
</feature>
<feature type="helix" evidence="23">
    <location>
        <begin position="187"/>
        <end position="197"/>
    </location>
</feature>
<feature type="helix" evidence="23">
    <location>
        <begin position="199"/>
        <end position="224"/>
    </location>
</feature>
<feature type="helix" evidence="23">
    <location>
        <begin position="366"/>
        <end position="385"/>
    </location>
</feature>
<feature type="helix" evidence="23">
    <location>
        <begin position="387"/>
        <end position="399"/>
    </location>
</feature>
<feature type="helix" evidence="23">
    <location>
        <begin position="405"/>
        <end position="426"/>
    </location>
</feature>
<feature type="turn" evidence="23">
    <location>
        <begin position="427"/>
        <end position="429"/>
    </location>
</feature>
<feature type="helix" evidence="21">
    <location>
        <begin position="431"/>
        <end position="442"/>
    </location>
</feature>
<keyword id="KW-0002">3D-structure</keyword>
<keyword id="KW-0025">Alternative splicing</keyword>
<keyword id="KW-1003">Cell membrane</keyword>
<keyword id="KW-1015">Disulfide bond</keyword>
<keyword id="KW-0297">G-protein coupled receptor</keyword>
<keyword id="KW-0325">Glycoprotein</keyword>
<keyword id="KW-0333">Golgi apparatus</keyword>
<keyword id="KW-0449">Lipoprotein</keyword>
<keyword id="KW-0472">Membrane</keyword>
<keyword id="KW-0564">Palmitate</keyword>
<keyword id="KW-0675">Receptor</keyword>
<keyword id="KW-1185">Reference proteome</keyword>
<keyword id="KW-0807">Transducer</keyword>
<keyword id="KW-0812">Transmembrane</keyword>
<keyword id="KW-1133">Transmembrane helix</keyword>
<sequence>MDPLNLSWYDDDLERQNWSRPFNGSDGKADRPHYNYYATLLTLLIAVIVFGNVLVCMAVSREKALQTTTNYLIVSLAVADLLVATLVMPWVVYLEVVGEWKFSRIHCDIFVTLDVMMCTASILNLCAISIDRYTAVAMPMLYNTRYSSKRRVTVMISIVWVLSFTISCPLLFGLNNADQNECIIANPAFVVYSSIVSFYVPFIVTLLVYIKIYIVLRRRRKRVNTKRSSRAFRAHLRAPLKGNCTHPEDMKLCTVIMKSNGSFPVNRRRVEAARRAQELEMEMLSSTSPPERTRYSPIPPSHHQLTLPDPSHHGLHSTPDSPAKPEKNGHAKDHPKIAKIFEIQTMPNGKTRTSLKTMSRRKLSQQKEKKATQMLAIVLGVFIICWLPFFITHILNIHCDCNIPPVLYSAFTWLGYVNSAVNPIIYTTFNIEFRKAFLKILHC</sequence>
<protein>
    <recommendedName>
        <fullName>D(2) dopamine receptor</fullName>
    </recommendedName>
    <alternativeName>
        <fullName>Dopamine D2 receptor</fullName>
    </alternativeName>
</protein>
<organism>
    <name type="scientific">Homo sapiens</name>
    <name type="common">Human</name>
    <dbReference type="NCBI Taxonomy" id="9606"/>
    <lineage>
        <taxon>Eukaryota</taxon>
        <taxon>Metazoa</taxon>
        <taxon>Chordata</taxon>
        <taxon>Craniata</taxon>
        <taxon>Vertebrata</taxon>
        <taxon>Euteleostomi</taxon>
        <taxon>Mammalia</taxon>
        <taxon>Eutheria</taxon>
        <taxon>Euarchontoglires</taxon>
        <taxon>Primates</taxon>
        <taxon>Haplorrhini</taxon>
        <taxon>Catarrhini</taxon>
        <taxon>Hominidae</taxon>
        <taxon>Homo</taxon>
    </lineage>
</organism>
<evidence type="ECO:0000250" key="1"/>
<evidence type="ECO:0000250" key="2">
    <source>
        <dbReference type="UniProtKB" id="P61168"/>
    </source>
</evidence>
<evidence type="ECO:0000250" key="3">
    <source>
        <dbReference type="UniProtKB" id="P61169"/>
    </source>
</evidence>
<evidence type="ECO:0000255" key="4"/>
<evidence type="ECO:0000255" key="5">
    <source>
        <dbReference type="PROSITE-ProRule" id="PRU00521"/>
    </source>
</evidence>
<evidence type="ECO:0000256" key="6">
    <source>
        <dbReference type="SAM" id="MobiDB-lite"/>
    </source>
</evidence>
<evidence type="ECO:0000269" key="7">
    <source>
    </source>
</evidence>
<evidence type="ECO:0000269" key="8">
    <source>
    </source>
</evidence>
<evidence type="ECO:0000269" key="9">
    <source>
    </source>
</evidence>
<evidence type="ECO:0000269" key="10">
    <source>
    </source>
</evidence>
<evidence type="ECO:0000269" key="11">
    <source>
    </source>
</evidence>
<evidence type="ECO:0000269" key="12">
    <source>
    </source>
</evidence>
<evidence type="ECO:0000269" key="13">
    <source>
    </source>
</evidence>
<evidence type="ECO:0000269" key="14">
    <source>
    </source>
</evidence>
<evidence type="ECO:0000303" key="15">
    <source>
    </source>
</evidence>
<evidence type="ECO:0000303" key="16">
    <source>
    </source>
</evidence>
<evidence type="ECO:0000305" key="17"/>
<evidence type="ECO:0000305" key="18">
    <source>
    </source>
</evidence>
<evidence type="ECO:0007744" key="19">
    <source>
        <dbReference type="PDB" id="5AER"/>
    </source>
</evidence>
<evidence type="ECO:0007744" key="20">
    <source>
        <dbReference type="PDB" id="6CM4"/>
    </source>
</evidence>
<evidence type="ECO:0007829" key="21">
    <source>
        <dbReference type="PDB" id="5AER"/>
    </source>
</evidence>
<evidence type="ECO:0007829" key="22">
    <source>
        <dbReference type="PDB" id="6CM4"/>
    </source>
</evidence>
<evidence type="ECO:0007829" key="23">
    <source>
        <dbReference type="PDB" id="7JVR"/>
    </source>
</evidence>
<accession>P14416</accession>
<accession>Q9NZR3</accession>
<accession>Q9UPA9</accession>
<gene>
    <name type="primary">DRD2</name>
</gene>